<accession>B9KHP7</accession>
<reference key="1">
    <citation type="journal article" date="2009" name="BMC Genomics">
        <title>Conservation in the face of diversity: multistrain analysis of an intracellular bacterium.</title>
        <authorList>
            <person name="Dark M.J."/>
            <person name="Herndon D.R."/>
            <person name="Kappmeyer L.S."/>
            <person name="Gonzales M.P."/>
            <person name="Nordeen E."/>
            <person name="Palmer G.H."/>
            <person name="Knowles D.P. Jr."/>
            <person name="Brayton K.A."/>
        </authorList>
    </citation>
    <scope>NUCLEOTIDE SEQUENCE [LARGE SCALE GENOMIC DNA]</scope>
    <source>
        <strain>Florida</strain>
    </source>
</reference>
<feature type="chain" id="PRO_1000196219" description="Large ribosomal subunit protein bL9">
    <location>
        <begin position="1"/>
        <end position="220"/>
    </location>
</feature>
<feature type="region of interest" description="Disordered" evidence="2">
    <location>
        <begin position="167"/>
        <end position="220"/>
    </location>
</feature>
<feature type="compositionally biased region" description="Low complexity" evidence="2">
    <location>
        <begin position="167"/>
        <end position="184"/>
    </location>
</feature>
<feature type="compositionally biased region" description="Acidic residues" evidence="2">
    <location>
        <begin position="211"/>
        <end position="220"/>
    </location>
</feature>
<comment type="function">
    <text evidence="1">Binds to the 23S rRNA.</text>
</comment>
<comment type="similarity">
    <text evidence="1">Belongs to the bacterial ribosomal protein bL9 family.</text>
</comment>
<proteinExistence type="inferred from homology"/>
<organism>
    <name type="scientific">Anaplasma marginale (strain Florida)</name>
    <dbReference type="NCBI Taxonomy" id="320483"/>
    <lineage>
        <taxon>Bacteria</taxon>
        <taxon>Pseudomonadati</taxon>
        <taxon>Pseudomonadota</taxon>
        <taxon>Alphaproteobacteria</taxon>
        <taxon>Rickettsiales</taxon>
        <taxon>Anaplasmataceae</taxon>
        <taxon>Anaplasma</taxon>
    </lineage>
</organism>
<evidence type="ECO:0000255" key="1">
    <source>
        <dbReference type="HAMAP-Rule" id="MF_00503"/>
    </source>
</evidence>
<evidence type="ECO:0000256" key="2">
    <source>
        <dbReference type="SAM" id="MobiDB-lite"/>
    </source>
</evidence>
<evidence type="ECO:0000305" key="3"/>
<protein>
    <recommendedName>
        <fullName evidence="1">Large ribosomal subunit protein bL9</fullName>
    </recommendedName>
    <alternativeName>
        <fullName evidence="3">50S ribosomal protein L9</fullName>
    </alternativeName>
</protein>
<dbReference type="EMBL" id="CP001079">
    <property type="protein sequence ID" value="ACM49009.1"/>
    <property type="molecule type" value="Genomic_DNA"/>
</dbReference>
<dbReference type="RefSeq" id="WP_012658830.1">
    <property type="nucleotide sequence ID" value="NZ_AFMS01000174.1"/>
</dbReference>
<dbReference type="SMR" id="B9KHP7"/>
<dbReference type="STRING" id="320483.AMF_121"/>
<dbReference type="GeneID" id="7398583"/>
<dbReference type="KEGG" id="amf:AMF_121"/>
<dbReference type="PATRIC" id="fig|320483.3.peg.140"/>
<dbReference type="eggNOG" id="COG0359">
    <property type="taxonomic scope" value="Bacteria"/>
</dbReference>
<dbReference type="HOGENOM" id="CLU_078938_1_1_5"/>
<dbReference type="Proteomes" id="UP000007307">
    <property type="component" value="Chromosome"/>
</dbReference>
<dbReference type="GO" id="GO:1990904">
    <property type="term" value="C:ribonucleoprotein complex"/>
    <property type="evidence" value="ECO:0007669"/>
    <property type="project" value="UniProtKB-KW"/>
</dbReference>
<dbReference type="GO" id="GO:0005840">
    <property type="term" value="C:ribosome"/>
    <property type="evidence" value="ECO:0007669"/>
    <property type="project" value="UniProtKB-KW"/>
</dbReference>
<dbReference type="GO" id="GO:0019843">
    <property type="term" value="F:rRNA binding"/>
    <property type="evidence" value="ECO:0007669"/>
    <property type="project" value="UniProtKB-UniRule"/>
</dbReference>
<dbReference type="GO" id="GO:0003735">
    <property type="term" value="F:structural constituent of ribosome"/>
    <property type="evidence" value="ECO:0007669"/>
    <property type="project" value="InterPro"/>
</dbReference>
<dbReference type="GO" id="GO:0006412">
    <property type="term" value="P:translation"/>
    <property type="evidence" value="ECO:0007669"/>
    <property type="project" value="UniProtKB-UniRule"/>
</dbReference>
<dbReference type="Gene3D" id="3.10.430.100">
    <property type="entry name" value="Ribosomal protein L9, C-terminal domain"/>
    <property type="match status" value="1"/>
</dbReference>
<dbReference type="Gene3D" id="3.40.5.10">
    <property type="entry name" value="Ribosomal protein L9, N-terminal domain"/>
    <property type="match status" value="1"/>
</dbReference>
<dbReference type="HAMAP" id="MF_00503">
    <property type="entry name" value="Ribosomal_bL9"/>
    <property type="match status" value="1"/>
</dbReference>
<dbReference type="InterPro" id="IPR000244">
    <property type="entry name" value="Ribosomal_bL9"/>
</dbReference>
<dbReference type="InterPro" id="IPR009027">
    <property type="entry name" value="Ribosomal_bL9/RNase_H1_N"/>
</dbReference>
<dbReference type="InterPro" id="IPR020594">
    <property type="entry name" value="Ribosomal_bL9_bac/chp"/>
</dbReference>
<dbReference type="InterPro" id="IPR020069">
    <property type="entry name" value="Ribosomal_bL9_C"/>
</dbReference>
<dbReference type="InterPro" id="IPR036791">
    <property type="entry name" value="Ribosomal_bL9_C_sf"/>
</dbReference>
<dbReference type="InterPro" id="IPR020070">
    <property type="entry name" value="Ribosomal_bL9_N"/>
</dbReference>
<dbReference type="InterPro" id="IPR036935">
    <property type="entry name" value="Ribosomal_bL9_N_sf"/>
</dbReference>
<dbReference type="NCBIfam" id="TIGR00158">
    <property type="entry name" value="L9"/>
    <property type="match status" value="1"/>
</dbReference>
<dbReference type="PANTHER" id="PTHR21368">
    <property type="entry name" value="50S RIBOSOMAL PROTEIN L9"/>
    <property type="match status" value="1"/>
</dbReference>
<dbReference type="Pfam" id="PF03948">
    <property type="entry name" value="Ribosomal_L9_C"/>
    <property type="match status" value="1"/>
</dbReference>
<dbReference type="Pfam" id="PF01281">
    <property type="entry name" value="Ribosomal_L9_N"/>
    <property type="match status" value="1"/>
</dbReference>
<dbReference type="SUPFAM" id="SSF55658">
    <property type="entry name" value="L9 N-domain-like"/>
    <property type="match status" value="1"/>
</dbReference>
<dbReference type="SUPFAM" id="SSF55653">
    <property type="entry name" value="Ribosomal protein L9 C-domain"/>
    <property type="match status" value="1"/>
</dbReference>
<sequence length="220" mass="23534">MLSVILKSSVRGLGKAGEIAKVRPGYARYLLADGKAVRATKDNVALLEQKLALIEEENSKKLAEAEGVAKSLGAERLIIVRQSSDDGKLFGSVTVRDVSKLLCDLGYDIQPRCVSFSEVIKRTGEYEINVELHADLVATLRLHVVRNESEAERVRLGIAKSEDQAAAAAEVEQAEDVAAAEQQDSSPVDDHADDADGVADGEGRDEGAGDASDEEEMPST</sequence>
<name>RL9_ANAMF</name>
<keyword id="KW-1185">Reference proteome</keyword>
<keyword id="KW-0687">Ribonucleoprotein</keyword>
<keyword id="KW-0689">Ribosomal protein</keyword>
<keyword id="KW-0694">RNA-binding</keyword>
<keyword id="KW-0699">rRNA-binding</keyword>
<gene>
    <name evidence="1" type="primary">rplI</name>
    <name type="ordered locus">AMF_121</name>
</gene>